<keyword id="KW-0030">Aminoacyl-tRNA synthetase</keyword>
<keyword id="KW-0067">ATP-binding</keyword>
<keyword id="KW-0963">Cytoplasm</keyword>
<keyword id="KW-0436">Ligase</keyword>
<keyword id="KW-0460">Magnesium</keyword>
<keyword id="KW-0479">Metal-binding</keyword>
<keyword id="KW-0547">Nucleotide-binding</keyword>
<keyword id="KW-0648">Protein biosynthesis</keyword>
<keyword id="KW-1185">Reference proteome</keyword>
<organism>
    <name type="scientific">Prochlorococcus marinus (strain NATL2A)</name>
    <dbReference type="NCBI Taxonomy" id="59920"/>
    <lineage>
        <taxon>Bacteria</taxon>
        <taxon>Bacillati</taxon>
        <taxon>Cyanobacteriota</taxon>
        <taxon>Cyanophyceae</taxon>
        <taxon>Synechococcales</taxon>
        <taxon>Prochlorococcaceae</taxon>
        <taxon>Prochlorococcus</taxon>
    </lineage>
</organism>
<dbReference type="EC" id="6.1.1.20" evidence="1"/>
<dbReference type="EMBL" id="CP000095">
    <property type="protein sequence ID" value="AAZ58327.1"/>
    <property type="molecule type" value="Genomic_DNA"/>
</dbReference>
<dbReference type="RefSeq" id="WP_011294924.1">
    <property type="nucleotide sequence ID" value="NC_007335.2"/>
</dbReference>
<dbReference type="SMR" id="Q46JK1"/>
<dbReference type="STRING" id="59920.PMN2A_0836"/>
<dbReference type="KEGG" id="pmn:PMN2A_0836"/>
<dbReference type="HOGENOM" id="CLU_025086_0_1_3"/>
<dbReference type="OrthoDB" id="9800719at2"/>
<dbReference type="PhylomeDB" id="Q46JK1"/>
<dbReference type="Proteomes" id="UP000002535">
    <property type="component" value="Chromosome"/>
</dbReference>
<dbReference type="GO" id="GO:0005737">
    <property type="term" value="C:cytoplasm"/>
    <property type="evidence" value="ECO:0007669"/>
    <property type="project" value="UniProtKB-SubCell"/>
</dbReference>
<dbReference type="GO" id="GO:0005524">
    <property type="term" value="F:ATP binding"/>
    <property type="evidence" value="ECO:0007669"/>
    <property type="project" value="UniProtKB-UniRule"/>
</dbReference>
<dbReference type="GO" id="GO:0000287">
    <property type="term" value="F:magnesium ion binding"/>
    <property type="evidence" value="ECO:0007669"/>
    <property type="project" value="UniProtKB-UniRule"/>
</dbReference>
<dbReference type="GO" id="GO:0004826">
    <property type="term" value="F:phenylalanine-tRNA ligase activity"/>
    <property type="evidence" value="ECO:0007669"/>
    <property type="project" value="UniProtKB-UniRule"/>
</dbReference>
<dbReference type="GO" id="GO:0000049">
    <property type="term" value="F:tRNA binding"/>
    <property type="evidence" value="ECO:0007669"/>
    <property type="project" value="InterPro"/>
</dbReference>
<dbReference type="GO" id="GO:0006432">
    <property type="term" value="P:phenylalanyl-tRNA aminoacylation"/>
    <property type="evidence" value="ECO:0007669"/>
    <property type="project" value="UniProtKB-UniRule"/>
</dbReference>
<dbReference type="CDD" id="cd00496">
    <property type="entry name" value="PheRS_alpha_core"/>
    <property type="match status" value="1"/>
</dbReference>
<dbReference type="FunFam" id="3.30.930.10:FF:000003">
    <property type="entry name" value="Phenylalanine--tRNA ligase alpha subunit"/>
    <property type="match status" value="1"/>
</dbReference>
<dbReference type="Gene3D" id="3.30.930.10">
    <property type="entry name" value="Bira Bifunctional Protein, Domain 2"/>
    <property type="match status" value="1"/>
</dbReference>
<dbReference type="HAMAP" id="MF_00281">
    <property type="entry name" value="Phe_tRNA_synth_alpha1"/>
    <property type="match status" value="1"/>
</dbReference>
<dbReference type="InterPro" id="IPR006195">
    <property type="entry name" value="aa-tRNA-synth_II"/>
</dbReference>
<dbReference type="InterPro" id="IPR045864">
    <property type="entry name" value="aa-tRNA-synth_II/BPL/LPL"/>
</dbReference>
<dbReference type="InterPro" id="IPR004529">
    <property type="entry name" value="Phe-tRNA-synth_IIc_asu"/>
</dbReference>
<dbReference type="InterPro" id="IPR004188">
    <property type="entry name" value="Phe-tRNA_ligase_II_N"/>
</dbReference>
<dbReference type="InterPro" id="IPR022911">
    <property type="entry name" value="Phe_tRNA_ligase_alpha1_bac"/>
</dbReference>
<dbReference type="InterPro" id="IPR002319">
    <property type="entry name" value="Phenylalanyl-tRNA_Synthase"/>
</dbReference>
<dbReference type="InterPro" id="IPR010978">
    <property type="entry name" value="tRNA-bd_arm"/>
</dbReference>
<dbReference type="NCBIfam" id="TIGR00468">
    <property type="entry name" value="pheS"/>
    <property type="match status" value="1"/>
</dbReference>
<dbReference type="PANTHER" id="PTHR11538:SF41">
    <property type="entry name" value="PHENYLALANINE--TRNA LIGASE, MITOCHONDRIAL"/>
    <property type="match status" value="1"/>
</dbReference>
<dbReference type="PANTHER" id="PTHR11538">
    <property type="entry name" value="PHENYLALANYL-TRNA SYNTHETASE"/>
    <property type="match status" value="1"/>
</dbReference>
<dbReference type="Pfam" id="PF02912">
    <property type="entry name" value="Phe_tRNA-synt_N"/>
    <property type="match status" value="1"/>
</dbReference>
<dbReference type="Pfam" id="PF01409">
    <property type="entry name" value="tRNA-synt_2d"/>
    <property type="match status" value="1"/>
</dbReference>
<dbReference type="SUPFAM" id="SSF55681">
    <property type="entry name" value="Class II aaRS and biotin synthetases"/>
    <property type="match status" value="1"/>
</dbReference>
<dbReference type="SUPFAM" id="SSF46589">
    <property type="entry name" value="tRNA-binding arm"/>
    <property type="match status" value="1"/>
</dbReference>
<dbReference type="PROSITE" id="PS50862">
    <property type="entry name" value="AA_TRNA_LIGASE_II"/>
    <property type="match status" value="1"/>
</dbReference>
<reference key="1">
    <citation type="journal article" date="2007" name="PLoS Genet.">
        <title>Patterns and implications of gene gain and loss in the evolution of Prochlorococcus.</title>
        <authorList>
            <person name="Kettler G.C."/>
            <person name="Martiny A.C."/>
            <person name="Huang K."/>
            <person name="Zucker J."/>
            <person name="Coleman M.L."/>
            <person name="Rodrigue S."/>
            <person name="Chen F."/>
            <person name="Lapidus A."/>
            <person name="Ferriera S."/>
            <person name="Johnson J."/>
            <person name="Steglich C."/>
            <person name="Church G.M."/>
            <person name="Richardson P."/>
            <person name="Chisholm S.W."/>
        </authorList>
    </citation>
    <scope>NUCLEOTIDE SEQUENCE [LARGE SCALE GENOMIC DNA]</scope>
    <source>
        <strain>NATL2A</strain>
    </source>
</reference>
<proteinExistence type="inferred from homology"/>
<evidence type="ECO:0000255" key="1">
    <source>
        <dbReference type="HAMAP-Rule" id="MF_00281"/>
    </source>
</evidence>
<protein>
    <recommendedName>
        <fullName evidence="1">Phenylalanine--tRNA ligase alpha subunit</fullName>
        <ecNumber evidence="1">6.1.1.20</ecNumber>
    </recommendedName>
    <alternativeName>
        <fullName evidence="1">Phenylalanyl-tRNA synthetase alpha subunit</fullName>
        <shortName evidence="1">PheRS</shortName>
    </alternativeName>
</protein>
<accession>Q46JK1</accession>
<sequence length="335" mass="37747">MSSTLSLKQLIGELEILESEAAKEIASAENSESIEKLRLSFLGKKGKLSLLLGGMKNLSNEERPLIGQRANVLKTQLQELIKEKLEILKTQALSQILIKETIDVTAPPTGITQGHRHPLITTTEQIIDLFLGLGYQVSEGPEIENDYYNFEALNIPPDHPARDMQDTFYLGGEYLLRTHTSPVQIRCLESKKPPVRIVSPGRVYRRDAVDATHSPVFHQVEVLAIDEKLDFSHLRGTVMAFLKAFFGDLPIRFRASYFPFTEPSAEVDVQWRGKWLEVMGCGMVDPAVLEELGIDPEKYSGFAAGLGVERFCMVRHGLDDIRKLYTSDLRFLEQF</sequence>
<comment type="catalytic activity">
    <reaction evidence="1">
        <text>tRNA(Phe) + L-phenylalanine + ATP = L-phenylalanyl-tRNA(Phe) + AMP + diphosphate + H(+)</text>
        <dbReference type="Rhea" id="RHEA:19413"/>
        <dbReference type="Rhea" id="RHEA-COMP:9668"/>
        <dbReference type="Rhea" id="RHEA-COMP:9699"/>
        <dbReference type="ChEBI" id="CHEBI:15378"/>
        <dbReference type="ChEBI" id="CHEBI:30616"/>
        <dbReference type="ChEBI" id="CHEBI:33019"/>
        <dbReference type="ChEBI" id="CHEBI:58095"/>
        <dbReference type="ChEBI" id="CHEBI:78442"/>
        <dbReference type="ChEBI" id="CHEBI:78531"/>
        <dbReference type="ChEBI" id="CHEBI:456215"/>
        <dbReference type="EC" id="6.1.1.20"/>
    </reaction>
</comment>
<comment type="cofactor">
    <cofactor evidence="1">
        <name>Mg(2+)</name>
        <dbReference type="ChEBI" id="CHEBI:18420"/>
    </cofactor>
    <text evidence="1">Binds 2 magnesium ions per tetramer.</text>
</comment>
<comment type="subunit">
    <text evidence="1">Tetramer of two alpha and two beta subunits.</text>
</comment>
<comment type="subcellular location">
    <subcellularLocation>
        <location evidence="1">Cytoplasm</location>
    </subcellularLocation>
</comment>
<comment type="similarity">
    <text evidence="1">Belongs to the class-II aminoacyl-tRNA synthetase family. Phe-tRNA synthetase alpha subunit type 1 subfamily.</text>
</comment>
<feature type="chain" id="PRO_0000232010" description="Phenylalanine--tRNA ligase alpha subunit">
    <location>
        <begin position="1"/>
        <end position="335"/>
    </location>
</feature>
<feature type="binding site" evidence="1">
    <location>
        <position position="262"/>
    </location>
    <ligand>
        <name>Mg(2+)</name>
        <dbReference type="ChEBI" id="CHEBI:18420"/>
        <note>shared with beta subunit</note>
    </ligand>
</feature>
<name>SYFA_PROMT</name>
<gene>
    <name evidence="1" type="primary">pheS</name>
    <name type="ordered locus">PMN2A_0836</name>
</gene>